<reference key="1">
    <citation type="journal article" date="1990" name="Virology">
        <title>Molecular characterization of a new hemagglutinin, subtype H14, of influenza A virus.</title>
        <authorList>
            <person name="Kawaoka Y."/>
            <person name="Yamnikova S."/>
            <person name="Chambers T.M."/>
            <person name="Lvov D.K."/>
            <person name="Webster R.G."/>
        </authorList>
    </citation>
    <scope>NUCLEOTIDE SEQUENCE [GENOMIC RNA]</scope>
</reference>
<gene>
    <name evidence="1" type="primary">HA</name>
</gene>
<comment type="function">
    <text>Binds to sialic acid-containing receptors on the cell surface, bringing about the attachment of the virus particle to the cell. This attachment induces virion internalization of about two third of the virus particles through clathrin-dependent endocytosis and about one third through a clathrin- and caveolin-independent pathway. Plays a major role in the determination of host range restriction and virulence. Class I viral fusion protein. Responsible for penetration of the virus into the cell cytoplasm by mediating the fusion of the membrane of the endocytosed virus particle with the endosomal membrane. Low pH in endosomes induces an irreversible conformational change in HA2, releasing the fusion hydrophobic peptide. Several trimers are required to form a competent fusion pore.</text>
</comment>
<comment type="function">
    <text evidence="1">Binds to sialic acid-containing receptors on the cell surface, bringing about the attachment of the virus particle to the cell. This attachment induces virion internalization either through clathrin-dependent endocytosis or through clathrin- and caveolin-independent pathway. Plays a major role in the determination of host range restriction and virulence. Class I viral fusion protein. Responsible for penetration of the virus into the cell cytoplasm by mediating the fusion of the membrane of the endocytosed virus particle with the endosomal membrane. Low pH in endosomes induces an irreversible conformational change in HA2, releasing the fusion hydrophobic peptide. Several trimers are required to form a competent fusion pore.</text>
</comment>
<comment type="subunit">
    <text evidence="1">Homotrimer of disulfide-linked HA1-HA2.</text>
</comment>
<comment type="subcellular location">
    <subcellularLocation>
        <location evidence="1">Virion membrane</location>
        <topology evidence="1">Single-pass type I membrane protein</topology>
    </subcellularLocation>
    <subcellularLocation>
        <location evidence="1">Host apical cell membrane</location>
        <topology evidence="1">Single-pass type I membrane protein</topology>
    </subcellularLocation>
    <text evidence="1">Targeted to the apical plasma membrane in epithelial polarized cells through a signal present in the transmembrane domain. Associated with glycosphingolipid- and cholesterol-enriched detergent-resistant lipid rafts.</text>
</comment>
<comment type="PTM">
    <text evidence="1">Palmitoylated.</text>
</comment>
<comment type="PTM">
    <text evidence="1">In natural infection, inactive HA is matured into HA1 and HA2 outside the cell by one or more trypsin-like, arginine-specific endoprotease secreted by the bronchial epithelial cells. One identified protease that may be involved in this process is secreted in lungs by club cells.</text>
</comment>
<comment type="miscellaneous">
    <text>Major glycoprotein, comprises over 80% of the envelope proteins present in virus particle.</text>
</comment>
<comment type="miscellaneous">
    <text>The extent of infection into host organism is determined by HA. Influenza viruses bud from the apical surface of polarized epithelial cells (e.g. bronchial epithelial cells) into lumen of lungs and are therefore usually pneumotropic. The reason is that HA is cleaved by tryptase clara which is restricted to lungs. However, HAs of H5 and H7 pantropic avian viruses subtypes can be cleaved by furin and subtilisin-type enzymes, allowing the virus to grow in other organs than lungs.</text>
</comment>
<comment type="miscellaneous">
    <text evidence="2">The influenza A genome consist of 8 RNA segments. Genetic variation of hemagglutinin and/or neuraminidase genes results in the emergence of new influenza strains. The mechanism of variation can be the result of point mutations or the result of genetic reassortment between segments of two different strains.</text>
</comment>
<comment type="similarity">
    <text evidence="1">Belongs to the influenza viruses hemagglutinin family.</text>
</comment>
<evidence type="ECO:0000255" key="1">
    <source>
        <dbReference type="HAMAP-Rule" id="MF_04072"/>
    </source>
</evidence>
<evidence type="ECO:0000305" key="2"/>
<feature type="signal peptide" evidence="1">
    <location>
        <begin position="1"/>
        <end position="17"/>
    </location>
</feature>
<feature type="chain" id="PRO_0000440497" description="Hemagglutinin" evidence="1">
    <location>
        <begin position="18"/>
        <end position="568"/>
    </location>
</feature>
<feature type="chain" id="PRO_0000039016" description="Hemagglutinin HA1 chain">
    <location>
        <begin position="18"/>
        <end position="346"/>
    </location>
</feature>
<feature type="chain" id="PRO_0000039017" description="Hemagglutinin HA2 chain" evidence="1">
    <location>
        <begin position="348"/>
        <end position="568"/>
    </location>
</feature>
<feature type="topological domain" description="Extracellular" evidence="1">
    <location>
        <begin position="18"/>
        <end position="531"/>
    </location>
</feature>
<feature type="transmembrane region" description="Helical" evidence="1">
    <location>
        <begin position="532"/>
        <end position="552"/>
    </location>
</feature>
<feature type="topological domain" description="Cytoplasmic" evidence="1">
    <location>
        <begin position="553"/>
        <end position="568"/>
    </location>
</feature>
<feature type="lipid moiety-binding region" description="S-palmitoyl cysteine; by host" evidence="1">
    <location>
        <position position="557"/>
    </location>
</feature>
<feature type="lipid moiety-binding region" description="S-palmitoyl cysteine; by host" evidence="1">
    <location>
        <position position="564"/>
    </location>
</feature>
<feature type="lipid moiety-binding region" description="S-palmitoyl cysteine; by host" evidence="1">
    <location>
        <position position="567"/>
    </location>
</feature>
<feature type="glycosylation site" description="N-linked (GlcNAc...) asparagine; by host" evidence="1">
    <location>
        <position position="21"/>
    </location>
</feature>
<feature type="glycosylation site" description="N-linked (GlcNAc...) asparagine; by host" evidence="1">
    <location>
        <position position="38"/>
    </location>
</feature>
<feature type="glycosylation site" description="N-linked (GlcNAc...) asparagine; by host" evidence="1">
    <location>
        <position position="62"/>
    </location>
</feature>
<feature type="glycosylation site" description="N-linked (GlcNAc...) asparagine; by host" evidence="1">
    <location>
        <position position="182"/>
    </location>
</feature>
<feature type="glycosylation site" description="N-linked (GlcNAc...) asparagine; by host" evidence="1">
    <location>
        <position position="242"/>
    </location>
</feature>
<feature type="glycosylation site" description="N-linked (GlcNAc...) asparagine; by host" evidence="1">
    <location>
        <position position="314"/>
    </location>
</feature>
<feature type="glycosylation site" description="N-linked (GlcNAc...) asparagine; by host" evidence="1">
    <location>
        <position position="501"/>
    </location>
</feature>
<feature type="disulfide bond" description="Interchain (between HA1 and HA2 chains)" evidence="1">
    <location>
        <begin position="30"/>
        <end position="484"/>
    </location>
</feature>
<feature type="disulfide bond" evidence="1">
    <location>
        <begin position="68"/>
        <end position="295"/>
    </location>
</feature>
<feature type="disulfide bond" evidence="1">
    <location>
        <begin position="80"/>
        <end position="92"/>
    </location>
</feature>
<feature type="disulfide bond" evidence="1">
    <location>
        <begin position="113"/>
        <end position="155"/>
    </location>
</feature>
<feature type="disulfide bond" evidence="1">
    <location>
        <begin position="299"/>
        <end position="323"/>
    </location>
</feature>
<feature type="disulfide bond" evidence="1">
    <location>
        <begin position="491"/>
        <end position="495"/>
    </location>
</feature>
<accession>P26136</accession>
<sequence>MIALILVALALSHTAYSQITNGTTGNPIICLGHHAVENGTSVKTLTDNHVEVVSAKELVETNHTDELCPSPLKLVDGQDCHLINGALGSPGCDRLQDTTWDVFIERPTAVDTCYPFDVPDYQSLRSILASSGSLEFIAEQFTWNGVKVDGSSSACLRGGRNSFFSRLNWLTKATNGNYGPINVTKENTGSYVRLYLWGVHHPSSDNEQTDLYKVATGRVTVSTRSDQISIVPNIGSRPRVRNQSGRISIYWTLVNPGDSIIFNSIGNLIAPRGHYKISKSTKSTVLKSDKRIGSCTSPCLTDKGSIQSDKPFQNVSRIAIGNCPKYVKQGSLMLATGMRNIPGKQAKGLFGAIAGFIENGWQGLIDGWYGFRHQNAEGTGTAADLKSTQAAIDQINGKLNRLIEKTNEKYHQIEKEFEQVEGRIQDLEKYVEDTKIDLWSYNAELLVALENQHTIDVTDSEMNKLFERVRRQLRENAEDQGNGCFEIFHQCDNNCIESIRNGTYDHNIYRDEAINNRIKINPVTLTMGYKDIILWISFSMSCFVFVALILGFVLWACQNGNIRCQICI</sequence>
<organism>
    <name type="scientific">Influenza A virus (strain A/Mallard/Astrakhan/263/1982 H14N5)</name>
    <name type="common">Influenza A virus (strain A/Mallard/Gurjev/263/1982 H14N5)</name>
    <dbReference type="NCBI Taxonomy" id="352564"/>
    <lineage>
        <taxon>Viruses</taxon>
        <taxon>Riboviria</taxon>
        <taxon>Orthornavirae</taxon>
        <taxon>Negarnaviricota</taxon>
        <taxon>Polyploviricotina</taxon>
        <taxon>Insthoviricetes</taxon>
        <taxon>Articulavirales</taxon>
        <taxon>Orthomyxoviridae</taxon>
        <taxon>Alphainfluenzavirus</taxon>
        <taxon>Alphainfluenzavirus influenzae</taxon>
        <taxon>Influenza A virus</taxon>
    </lineage>
</organism>
<keyword id="KW-1167">Clathrin- and caveolin-independent endocytosis of virus by host</keyword>
<keyword id="KW-1165">Clathrin-mediated endocytosis of virus by host</keyword>
<keyword id="KW-1015">Disulfide bond</keyword>
<keyword id="KW-1170">Fusion of virus membrane with host endosomal membrane</keyword>
<keyword id="KW-1168">Fusion of virus membrane with host membrane</keyword>
<keyword id="KW-0325">Glycoprotein</keyword>
<keyword id="KW-0348">Hemagglutinin</keyword>
<keyword id="KW-1032">Host cell membrane</keyword>
<keyword id="KW-1043">Host membrane</keyword>
<keyword id="KW-0945">Host-virus interaction</keyword>
<keyword id="KW-0449">Lipoprotein</keyword>
<keyword id="KW-0472">Membrane</keyword>
<keyword id="KW-0564">Palmitate</keyword>
<keyword id="KW-0732">Signal</keyword>
<keyword id="KW-0812">Transmembrane</keyword>
<keyword id="KW-1133">Transmembrane helix</keyword>
<keyword id="KW-1161">Viral attachment to host cell</keyword>
<keyword id="KW-0261">Viral envelope protein</keyword>
<keyword id="KW-1162">Viral penetration into host cytoplasm</keyword>
<keyword id="KW-0946">Virion</keyword>
<keyword id="KW-1164">Virus endocytosis by host</keyword>
<keyword id="KW-1160">Virus entry into host cell</keyword>
<protein>
    <recommendedName>
        <fullName evidence="1">Hemagglutinin</fullName>
    </recommendedName>
    <component>
        <recommendedName>
            <fullName evidence="1">Hemagglutinin HA1 chain</fullName>
        </recommendedName>
    </component>
    <component>
        <recommendedName>
            <fullName evidence="1">Hemagglutinin HA2 chain</fullName>
        </recommendedName>
    </component>
</protein>
<proteinExistence type="inferred from homology"/>
<organismHost>
    <name type="scientific">Aves</name>
    <dbReference type="NCBI Taxonomy" id="8782"/>
</organismHost>
<dbReference type="EMBL" id="M35997">
    <property type="status" value="NOT_ANNOTATED_CDS"/>
    <property type="molecule type" value="Genomic_RNA"/>
</dbReference>
<dbReference type="SMR" id="P26136"/>
<dbReference type="GlyCosmos" id="P26136">
    <property type="glycosylation" value="7 sites, No reported glycans"/>
</dbReference>
<dbReference type="PRO" id="PR:P26136"/>
<dbReference type="GO" id="GO:0020002">
    <property type="term" value="C:host cell plasma membrane"/>
    <property type="evidence" value="ECO:0007669"/>
    <property type="project" value="UniProtKB-SubCell"/>
</dbReference>
<dbReference type="GO" id="GO:0016020">
    <property type="term" value="C:membrane"/>
    <property type="evidence" value="ECO:0007669"/>
    <property type="project" value="UniProtKB-UniRule"/>
</dbReference>
<dbReference type="GO" id="GO:0019031">
    <property type="term" value="C:viral envelope"/>
    <property type="evidence" value="ECO:0007669"/>
    <property type="project" value="UniProtKB-UniRule"/>
</dbReference>
<dbReference type="GO" id="GO:0055036">
    <property type="term" value="C:virion membrane"/>
    <property type="evidence" value="ECO:0007669"/>
    <property type="project" value="UniProtKB-SubCell"/>
</dbReference>
<dbReference type="GO" id="GO:0046789">
    <property type="term" value="F:host cell surface receptor binding"/>
    <property type="evidence" value="ECO:0007669"/>
    <property type="project" value="UniProtKB-UniRule"/>
</dbReference>
<dbReference type="GO" id="GO:0075512">
    <property type="term" value="P:clathrin-dependent endocytosis of virus by host cell"/>
    <property type="evidence" value="ECO:0007669"/>
    <property type="project" value="UniProtKB-UniRule"/>
</dbReference>
<dbReference type="GO" id="GO:0039654">
    <property type="term" value="P:fusion of virus membrane with host endosome membrane"/>
    <property type="evidence" value="ECO:0007669"/>
    <property type="project" value="UniProtKB-UniRule"/>
</dbReference>
<dbReference type="GO" id="GO:0019064">
    <property type="term" value="P:fusion of virus membrane with host plasma membrane"/>
    <property type="evidence" value="ECO:0007669"/>
    <property type="project" value="InterPro"/>
</dbReference>
<dbReference type="GO" id="GO:0046761">
    <property type="term" value="P:viral budding from plasma membrane"/>
    <property type="evidence" value="ECO:0007669"/>
    <property type="project" value="UniProtKB-UniRule"/>
</dbReference>
<dbReference type="GO" id="GO:0019062">
    <property type="term" value="P:virion attachment to host cell"/>
    <property type="evidence" value="ECO:0007669"/>
    <property type="project" value="UniProtKB-KW"/>
</dbReference>
<dbReference type="Gene3D" id="3.90.20.10">
    <property type="match status" value="1"/>
</dbReference>
<dbReference type="Gene3D" id="3.90.209.20">
    <property type="match status" value="1"/>
</dbReference>
<dbReference type="HAMAP" id="MF_04072">
    <property type="entry name" value="INFV_HEMA"/>
    <property type="match status" value="1"/>
</dbReference>
<dbReference type="InterPro" id="IPR008980">
    <property type="entry name" value="Capsid_hemagglutn"/>
</dbReference>
<dbReference type="InterPro" id="IPR013828">
    <property type="entry name" value="Hemagglutn_HA1_a/b_dom_sf"/>
</dbReference>
<dbReference type="InterPro" id="IPR000149">
    <property type="entry name" value="Hemagglutn_influenz_A"/>
</dbReference>
<dbReference type="InterPro" id="IPR001364">
    <property type="entry name" value="Hemagglutn_influenz_A/B"/>
</dbReference>
<dbReference type="Pfam" id="PF00509">
    <property type="entry name" value="Hemagglutinin"/>
    <property type="match status" value="1"/>
</dbReference>
<dbReference type="PRINTS" id="PR00330">
    <property type="entry name" value="HEMAGGLUTN1"/>
</dbReference>
<dbReference type="PRINTS" id="PR00329">
    <property type="entry name" value="HEMAGGLUTN12"/>
</dbReference>
<dbReference type="SUPFAM" id="SSF58064">
    <property type="entry name" value="Influenza hemagglutinin (stalk)"/>
    <property type="match status" value="1"/>
</dbReference>
<dbReference type="SUPFAM" id="SSF49818">
    <property type="entry name" value="Viral protein domain"/>
    <property type="match status" value="1"/>
</dbReference>
<name>HEMA_I82A1</name>